<comment type="function">
    <text evidence="1">Catalyzes the formation of methylglyoxal from dihydroxyacetone phosphate.</text>
</comment>
<comment type="catalytic activity">
    <reaction evidence="1">
        <text>dihydroxyacetone phosphate = methylglyoxal + phosphate</text>
        <dbReference type="Rhea" id="RHEA:17937"/>
        <dbReference type="ChEBI" id="CHEBI:17158"/>
        <dbReference type="ChEBI" id="CHEBI:43474"/>
        <dbReference type="ChEBI" id="CHEBI:57642"/>
        <dbReference type="EC" id="4.2.3.3"/>
    </reaction>
</comment>
<comment type="similarity">
    <text evidence="1">Belongs to the methylglyoxal synthase family.</text>
</comment>
<protein>
    <recommendedName>
        <fullName evidence="1">Methylglyoxal synthase</fullName>
        <shortName evidence="1">MGS</shortName>
        <ecNumber evidence="1">4.2.3.3</ecNumber>
    </recommendedName>
</protein>
<accession>B1IVW9</accession>
<reference key="1">
    <citation type="submission" date="2008-02" db="EMBL/GenBank/DDBJ databases">
        <title>Complete sequence of Escherichia coli C str. ATCC 8739.</title>
        <authorList>
            <person name="Copeland A."/>
            <person name="Lucas S."/>
            <person name="Lapidus A."/>
            <person name="Glavina del Rio T."/>
            <person name="Dalin E."/>
            <person name="Tice H."/>
            <person name="Bruce D."/>
            <person name="Goodwin L."/>
            <person name="Pitluck S."/>
            <person name="Kiss H."/>
            <person name="Brettin T."/>
            <person name="Detter J.C."/>
            <person name="Han C."/>
            <person name="Kuske C.R."/>
            <person name="Schmutz J."/>
            <person name="Larimer F."/>
            <person name="Land M."/>
            <person name="Hauser L."/>
            <person name="Kyrpides N."/>
            <person name="Mikhailova N."/>
            <person name="Ingram L."/>
            <person name="Richardson P."/>
        </authorList>
    </citation>
    <scope>NUCLEOTIDE SEQUENCE [LARGE SCALE GENOMIC DNA]</scope>
    <source>
        <strain>ATCC 8739 / DSM 1576 / NBRC 3972 / NCIMB 8545 / WDCM 00012 / Crooks</strain>
    </source>
</reference>
<feature type="chain" id="PRO_1000081955" description="Methylglyoxal synthase">
    <location>
        <begin position="1"/>
        <end position="152"/>
    </location>
</feature>
<feature type="domain" description="MGS-like" evidence="1">
    <location>
        <begin position="6"/>
        <end position="152"/>
    </location>
</feature>
<feature type="active site" description="Proton donor/acceptor" evidence="1">
    <location>
        <position position="71"/>
    </location>
</feature>
<feature type="binding site" evidence="1">
    <location>
        <position position="19"/>
    </location>
    <ligand>
        <name>substrate</name>
    </ligand>
</feature>
<feature type="binding site" evidence="1">
    <location>
        <position position="23"/>
    </location>
    <ligand>
        <name>substrate</name>
    </ligand>
</feature>
<feature type="binding site" evidence="1">
    <location>
        <begin position="45"/>
        <end position="48"/>
    </location>
    <ligand>
        <name>substrate</name>
    </ligand>
</feature>
<feature type="binding site" evidence="1">
    <location>
        <begin position="65"/>
        <end position="66"/>
    </location>
    <ligand>
        <name>substrate</name>
    </ligand>
</feature>
<feature type="binding site" evidence="1">
    <location>
        <position position="98"/>
    </location>
    <ligand>
        <name>substrate</name>
    </ligand>
</feature>
<proteinExistence type="inferred from homology"/>
<organism>
    <name type="scientific">Escherichia coli (strain ATCC 8739 / DSM 1576 / NBRC 3972 / NCIMB 8545 / WDCM 00012 / Crooks)</name>
    <dbReference type="NCBI Taxonomy" id="481805"/>
    <lineage>
        <taxon>Bacteria</taxon>
        <taxon>Pseudomonadati</taxon>
        <taxon>Pseudomonadota</taxon>
        <taxon>Gammaproteobacteria</taxon>
        <taxon>Enterobacterales</taxon>
        <taxon>Enterobacteriaceae</taxon>
        <taxon>Escherichia</taxon>
    </lineage>
</organism>
<gene>
    <name evidence="1" type="primary">mgsA</name>
    <name type="ordered locus">EcolC_2633</name>
</gene>
<evidence type="ECO:0000255" key="1">
    <source>
        <dbReference type="HAMAP-Rule" id="MF_00549"/>
    </source>
</evidence>
<sequence length="152" mass="16919">MELTTRTLPARKHIALVAHDHCKQMLMSWVERHQPLLEQHVLYATGTTGNLISRATGMNVNAMLSGPMGGDQQVGALISEGKIDVLIFFWDPLNAVPHDPDVKALLRLATVWNIPVATNVATADFIIQSPHFNDAVDILIPDYQRYLADRLK</sequence>
<name>MGSA_ECOLC</name>
<dbReference type="EC" id="4.2.3.3" evidence="1"/>
<dbReference type="EMBL" id="CP000946">
    <property type="protein sequence ID" value="ACA78263.1"/>
    <property type="molecule type" value="Genomic_DNA"/>
</dbReference>
<dbReference type="RefSeq" id="WP_000424181.1">
    <property type="nucleotide sequence ID" value="NZ_MTFT01000009.1"/>
</dbReference>
<dbReference type="SMR" id="B1IVW9"/>
<dbReference type="GeneID" id="93776451"/>
<dbReference type="KEGG" id="ecl:EcolC_2633"/>
<dbReference type="HOGENOM" id="CLU_120420_0_1_6"/>
<dbReference type="GO" id="GO:0005829">
    <property type="term" value="C:cytosol"/>
    <property type="evidence" value="ECO:0007669"/>
    <property type="project" value="TreeGrafter"/>
</dbReference>
<dbReference type="GO" id="GO:0008929">
    <property type="term" value="F:methylglyoxal synthase activity"/>
    <property type="evidence" value="ECO:0007669"/>
    <property type="project" value="UniProtKB-UniRule"/>
</dbReference>
<dbReference type="GO" id="GO:0019242">
    <property type="term" value="P:methylglyoxal biosynthetic process"/>
    <property type="evidence" value="ECO:0007669"/>
    <property type="project" value="UniProtKB-UniRule"/>
</dbReference>
<dbReference type="CDD" id="cd01422">
    <property type="entry name" value="MGS"/>
    <property type="match status" value="1"/>
</dbReference>
<dbReference type="FunFam" id="3.40.50.1380:FF:000002">
    <property type="entry name" value="Methylglyoxal synthase"/>
    <property type="match status" value="1"/>
</dbReference>
<dbReference type="Gene3D" id="3.40.50.1380">
    <property type="entry name" value="Methylglyoxal synthase-like domain"/>
    <property type="match status" value="1"/>
</dbReference>
<dbReference type="HAMAP" id="MF_00549">
    <property type="entry name" value="Methylglyoxal_synth"/>
    <property type="match status" value="1"/>
</dbReference>
<dbReference type="InterPro" id="IPR004363">
    <property type="entry name" value="Methylgl_synth"/>
</dbReference>
<dbReference type="InterPro" id="IPR018148">
    <property type="entry name" value="Methylglyoxal_synth_AS"/>
</dbReference>
<dbReference type="InterPro" id="IPR011607">
    <property type="entry name" value="MGS-like_dom"/>
</dbReference>
<dbReference type="InterPro" id="IPR036914">
    <property type="entry name" value="MGS-like_dom_sf"/>
</dbReference>
<dbReference type="NCBIfam" id="TIGR00160">
    <property type="entry name" value="MGSA"/>
    <property type="match status" value="1"/>
</dbReference>
<dbReference type="NCBIfam" id="NF003559">
    <property type="entry name" value="PRK05234.1"/>
    <property type="match status" value="1"/>
</dbReference>
<dbReference type="PANTHER" id="PTHR30492">
    <property type="entry name" value="METHYLGLYOXAL SYNTHASE"/>
    <property type="match status" value="1"/>
</dbReference>
<dbReference type="PANTHER" id="PTHR30492:SF0">
    <property type="entry name" value="METHYLGLYOXAL SYNTHASE"/>
    <property type="match status" value="1"/>
</dbReference>
<dbReference type="Pfam" id="PF02142">
    <property type="entry name" value="MGS"/>
    <property type="match status" value="1"/>
</dbReference>
<dbReference type="PIRSF" id="PIRSF006614">
    <property type="entry name" value="Methylglyox_syn"/>
    <property type="match status" value="1"/>
</dbReference>
<dbReference type="SMART" id="SM00851">
    <property type="entry name" value="MGS"/>
    <property type="match status" value="1"/>
</dbReference>
<dbReference type="SUPFAM" id="SSF52335">
    <property type="entry name" value="Methylglyoxal synthase-like"/>
    <property type="match status" value="1"/>
</dbReference>
<dbReference type="PROSITE" id="PS01335">
    <property type="entry name" value="METHYLGLYOXAL_SYNTH"/>
    <property type="match status" value="1"/>
</dbReference>
<dbReference type="PROSITE" id="PS51855">
    <property type="entry name" value="MGS"/>
    <property type="match status" value="1"/>
</dbReference>
<keyword id="KW-0456">Lyase</keyword>